<accession>J7H8Q3</accession>
<organismHost>
    <name type="scientific">Boa constrictor</name>
    <name type="common">Boa</name>
    <dbReference type="NCBI Taxonomy" id="8574"/>
</organismHost>
<reference key="1">
    <citation type="journal article" date="2012" name="MBio">
        <title>Identification, characterization, and in vitro culture of highly divergent arenaviruses from bosysa constrictors and annulated tree boas: candidate etiological agents for snake inclusion body disease.</title>
        <authorList>
            <person name="Stenglein M.D."/>
            <person name="Sanders C."/>
            <person name="Kistler A.L."/>
            <person name="Ruby J.G."/>
            <person name="Franco J.Y."/>
            <person name="Reavill D.R."/>
            <person name="Dunker F."/>
            <person name="Derisi J.L."/>
        </authorList>
    </citation>
    <scope>NUCLEOTIDE SEQUENCE [LARGE SCALE GENOMIC DNA]</scope>
</reference>
<reference key="2">
    <citation type="journal article" date="2017" name="Crit. Rev. Microbiol.">
        <title>Bunyaviridae RdRps: structure, motifs, and RNA synthesis machinery.</title>
        <authorList>
            <person name="Amroun A."/>
            <person name="Priet S."/>
            <person name="de Lamballerie X."/>
            <person name="Querat G."/>
        </authorList>
    </citation>
    <scope>REVIEW</scope>
</reference>
<gene>
    <name type="primary">L</name>
    <name type="ordered locus">Segment L</name>
</gene>
<proteinExistence type="inferred from homology"/>
<feature type="chain" id="PRO_0000443035" description="RNA-directed RNA polymerase L">
    <location>
        <begin position="1"/>
        <end position="2066"/>
    </location>
</feature>
<feature type="domain" description="RdRp catalytic" evidence="6">
    <location>
        <begin position="1131"/>
        <end position="1331"/>
    </location>
</feature>
<feature type="region of interest" description="Endonuclease" evidence="5">
    <location>
        <begin position="32"/>
        <end position="205"/>
    </location>
</feature>
<feature type="region of interest" description="Disordered" evidence="7">
    <location>
        <begin position="808"/>
        <end position="837"/>
    </location>
</feature>
<feature type="active site" description="For endonuclease activity" evidence="5">
    <location>
        <position position="120"/>
    </location>
</feature>
<feature type="binding site" evidence="5">
    <location>
        <position position="54"/>
    </location>
    <ligand>
        <name>Mn(2+)</name>
        <dbReference type="ChEBI" id="CHEBI:29035"/>
        <label>1</label>
    </ligand>
</feature>
<feature type="binding site" evidence="5">
    <location>
        <position position="92"/>
    </location>
    <ligand>
        <name>Mn(2+)</name>
        <dbReference type="ChEBI" id="CHEBI:29035"/>
        <label>1</label>
    </ligand>
</feature>
<feature type="binding site" evidence="5">
    <location>
        <position position="92"/>
    </location>
    <ligand>
        <name>Mn(2+)</name>
        <dbReference type="ChEBI" id="CHEBI:29035"/>
        <label>2</label>
    </ligand>
</feature>
<feature type="binding site" evidence="5">
    <location>
        <position position="107"/>
    </location>
    <ligand>
        <name>Mn(2+)</name>
        <dbReference type="ChEBI" id="CHEBI:29035"/>
        <label>1</label>
    </ligand>
</feature>
<feature type="binding site" evidence="1">
    <location>
        <position position="1293"/>
    </location>
    <ligand>
        <name>Mg(2+)</name>
        <dbReference type="ChEBI" id="CHEBI:18420"/>
        <note>catalytic; for RdRp activity</note>
    </ligand>
</feature>
<name>L_GOGV</name>
<organism>
    <name type="scientific">Alethinophid 1 reptarenavirus (isolate AlRrV1/Boa/USA/BC/2009)</name>
    <name type="common">Golden Gate virus</name>
    <dbReference type="NCBI Taxonomy" id="1223562"/>
    <lineage>
        <taxon>Viruses</taxon>
        <taxon>Riboviria</taxon>
        <taxon>Orthornavirae</taxon>
        <taxon>Negarnaviricota</taxon>
        <taxon>Polyploviricotina</taxon>
        <taxon>Ellioviricetes</taxon>
        <taxon>Bunyavirales</taxon>
        <taxon>Arenaviridae</taxon>
        <taxon>Reptarenavirus</taxon>
        <taxon>Reptarenavirus aurei</taxon>
    </lineage>
</organism>
<evidence type="ECO:0000250" key="1">
    <source>
        <dbReference type="UniProtKB" id="I0DF35"/>
    </source>
</evidence>
<evidence type="ECO:0000250" key="2">
    <source>
        <dbReference type="UniProtKB" id="P14240"/>
    </source>
</evidence>
<evidence type="ECO:0000250" key="3">
    <source>
        <dbReference type="UniProtKB" id="P14241"/>
    </source>
</evidence>
<evidence type="ECO:0000250" key="4">
    <source>
        <dbReference type="UniProtKB" id="P27316"/>
    </source>
</evidence>
<evidence type="ECO:0000250" key="5">
    <source>
        <dbReference type="UniProtKB" id="Q6GWS6"/>
    </source>
</evidence>
<evidence type="ECO:0000255" key="6">
    <source>
        <dbReference type="PROSITE-ProRule" id="PRU00539"/>
    </source>
</evidence>
<evidence type="ECO:0000256" key="7">
    <source>
        <dbReference type="SAM" id="MobiDB-lite"/>
    </source>
</evidence>
<evidence type="ECO:0000305" key="8"/>
<sequence>MSSICPEDSELERLKGLVLEVLSYERDLYRPGWISNTAGEMAMNAIKLRSTIHELNCCRDTGLKHNNDLKEMNELFDEAIGSHETVKTIVPDGYLIDKNNNVLTVLEVSTRTEPSDQTKKVQLDRLKYDGFENLLRPLGWTLNVITISEKKPRIGRIPEILMFKLLSTSLSILSYTTDICNWISEEDYLELKKSLTSYDFRTLTEEFKGQRLLFDIESAEDPYKDLFDWMLKNSEKLPFSLNWEGPKITEMIQDFKREDKQLRLLEIMRSAVTGLNFRTNHLSLLNKLKSLNLLNTRRKQNKVYDYIALMLFVRDSEIHDFPKGWFPSVNDRLVRVDSVDSPLSVYKKLVERMIKSLQSLQNEVGSKQKLGELKILIKFLEESSNNFIEPPVLKTMYFGLPARVLVPQPSLCLKIINDVPYEPQTTIVTSDETDTIEKVALNLILSQKTRSTPRASMSEEFFFQSVNGCLLLYKCTGEGQKAFSILCKSYKQGELRYSFYSFNINPSRLFPLIFSAKPIANLVDQLIMLINPICEDAERLQETIKRQESVNEFLISSEYSDKQIDDLKVKVTYLIYGILTTPTKRLQIELQSQRYYIMDTLSIIHHKDLKAKVIGNCITYDEYYLRDLAHGLINEILSCKNIGLFLKVTWALNISYLCHLITKETPDRLSDLRDCYEKFFKPKFQFMSNMIYDCKSVDELVERMEQEVNDFIQCEEPSFETKPFLYEPILADFLKWISTEKFNGIDGEQLLNPKDYLTSNIDVLDLTSNKSTFKRSKNHHMNDVLDQQYDTEKLLKRVISERLHKRITKSTKAGDDPSTAKSFKSGGESVKERNWKAGGEKRKKTRLAYEEFLGIVQGLIVETDSEEDLNDFLLQINKCLHEIDDELKKMNPKEINDLQKTKYCLVLDVIRELLGPEVCDLVRSTCYSTKLSDLPTDLLRKEAYERIVGETMSRAPLEFPRNVDTIDVTNISAGMVVTKYELKEFFSSFKFLLLWAGFNNFQGTYDHRSGPQSSFLSISNKYRGESMLSTRVTNSEALQDRLIAIKYGAPTLRNILFSTLNLEMKNSEIGPNNKPLQFGLAIKEQVGGPRELYVGDSDTKLITRVLEETSRNIGNRLNNSCLNSDKKFSNFMKRIARSFFENEIVLSMDHSKWGPFNSPLQYHLMFEAMESINDTDGRRLDFSFAKTILKWHLFKAVETPQILAEDVILSSLDVSLGRRDRQIGKERTFETFMVDAVLSNKPVPSQIHSWFDMGQGILHHTSDLYGSLASEYITKKIKEIFGVRSSTMNTSDDMVLLFHIKYKNEDSNQKDELLLITNFLCLVSNCLNKHISPKFCCSPLVGEFKSHFEVEATMVPLFTKFFAASINNFRCKTPMELFNTCDAIVEQGICNGMSLKVADSLKGRMVEMLGWLGYVADPLMKPVESRQQDWLEGCLSYRKLRSLESWLMDLGIGKLKLDVLKLELLKVIKELRESSIAPSVAYNKMVDISKSELGEITLWFPTLNGEFKLIVRSKLNLGTTINETCENLLIKKLINHYSRYSKQGLGLLIAEGLERSAFQSSVVTGFIGLSISLSGACIRKGDGTFLTLKESKNVVKPVAEVFPSLVMQSVCAVGDWVCGVESEMDKQMNKSIYMRTSLVNTAEFRFGLDELTAAIEMTMPDLFDKYLKDIVPPDKRLLMRHSWKVRPEMELLIECANKGLSIFDGRIDRQEEAVVLVDYYEPGRLLRRTMKLEKRGPERTARKGLQAIVNRMILDSILEPKIIDKTMVMDATKLAPYEGSMEDLKSHGESGVRRYIQQVLLGRESHYRQKEDEPNEITSSNVVVYGRGTPEFPLEDGTWLRGAKLGTSNPIKLQCCLQQISNDLKIQATLITHTGRAHYQDFMFLKRVIISDSDFDEPEILDTLEFRDVVVVENSKPNGKPCFLFMGCVIPLESDLVGSIMTHMSEAEWEELWKLVRTYFITRMKGEISCLPKARFDALWGMVSRIFGYSTVEKVVTMGFHQLDSFAEFLTFTDRVFTTKGPTLVFHRLKGLLVSYPAGPLLYKGHRLMLYKDWASGTPEPETLED</sequence>
<comment type="function">
    <text evidence="2">RNA-dependent RNA polymerase, which is responsible for the replication and transcription of the viral RNA genome. During transcription, synthesizes subgenomic RNAs and assures their capping by a cap-snatching mechanism, which involves the endonuclease activity cleaving the host capped pre-mRNAs. These short capped RNAs are then used as primers for viral transcription. The 3'-end of subgenomic mRNAs molecules are heterogeneous and not polyadenylated. The replicase function is to direct synthesis of antigenomic and genomic RNA which are encapsidated and non capped. As a consequence of the use of the same enzyme for both transcription and replication, these mechanisms need to be well coordinated.</text>
</comment>
<comment type="catalytic activity">
    <reaction evidence="6">
        <text>RNA(n) + a ribonucleoside 5'-triphosphate = RNA(n+1) + diphosphate</text>
        <dbReference type="Rhea" id="RHEA:21248"/>
        <dbReference type="Rhea" id="RHEA-COMP:14527"/>
        <dbReference type="Rhea" id="RHEA-COMP:17342"/>
        <dbReference type="ChEBI" id="CHEBI:33019"/>
        <dbReference type="ChEBI" id="CHEBI:61557"/>
        <dbReference type="ChEBI" id="CHEBI:140395"/>
        <dbReference type="EC" id="2.7.7.48"/>
    </reaction>
</comment>
<comment type="cofactor">
    <cofactor evidence="5">
        <name>Mn(2+)</name>
        <dbReference type="ChEBI" id="CHEBI:29035"/>
    </cofactor>
    <text evidence="5">For endonuclease activity. Binds 2 Mn(2+) ions in the active site. The divalent metal ions are crucial for catalytic activity.</text>
</comment>
<comment type="cofactor">
    <cofactor evidence="3">
        <name>Mg(2+)</name>
        <dbReference type="ChEBI" id="CHEBI:18420"/>
    </cofactor>
    <cofactor evidence="3">
        <name>Mn(2+)</name>
        <dbReference type="ChEBI" id="CHEBI:29035"/>
    </cofactor>
    <text evidence="3">For polymerase activity.</text>
</comment>
<comment type="subunit">
    <text evidence="4">Homomultimer; the oligomeric structure is essential for the polymerase activity. Interacts with nucleoprotein N.</text>
</comment>
<comment type="subcellular location">
    <subcellularLocation>
        <location evidence="3">Virion</location>
    </subcellularLocation>
    <subcellularLocation>
        <location evidence="3">Host cytoplasm</location>
    </subcellularLocation>
</comment>
<comment type="domain">
    <text evidence="2">The N-terminus contains the endonuclease activity (endoN). The central region contains the RdRp activity.</text>
</comment>
<comment type="miscellaneous">
    <text evidence="5">Classified as His(-) endonuclease since it does not have a histidine upstream of the active site that coordinates the first cation. His(-) endonucleases display very low activity in vitro, although they are clearly active in vivo.</text>
</comment>
<comment type="similarity">
    <text evidence="8">Belongs to the Arenaviridae RNA polymerase family.</text>
</comment>
<dbReference type="EC" id="2.7.7.48" evidence="1"/>
<dbReference type="EC" id="3.1.-.-" evidence="5"/>
<dbReference type="EMBL" id="JQ717263">
    <property type="protein sequence ID" value="AFP93553.1"/>
    <property type="molecule type" value="Genomic_RNA"/>
</dbReference>
<dbReference type="RefSeq" id="YP_006590089.1">
    <property type="nucleotide sequence ID" value="NC_018482.1"/>
</dbReference>
<dbReference type="SMR" id="J7H8Q3"/>
<dbReference type="GeneID" id="13466435"/>
<dbReference type="KEGG" id="vg:13466435"/>
<dbReference type="Proteomes" id="UP000134698">
    <property type="component" value="Genome"/>
</dbReference>
<dbReference type="GO" id="GO:0030430">
    <property type="term" value="C:host cell cytoplasm"/>
    <property type="evidence" value="ECO:0007669"/>
    <property type="project" value="UniProtKB-SubCell"/>
</dbReference>
<dbReference type="GO" id="GO:0044423">
    <property type="term" value="C:virion component"/>
    <property type="evidence" value="ECO:0007669"/>
    <property type="project" value="UniProtKB-KW"/>
</dbReference>
<dbReference type="GO" id="GO:0016787">
    <property type="term" value="F:hydrolase activity"/>
    <property type="evidence" value="ECO:0007669"/>
    <property type="project" value="UniProtKB-KW"/>
</dbReference>
<dbReference type="GO" id="GO:0046872">
    <property type="term" value="F:metal ion binding"/>
    <property type="evidence" value="ECO:0007669"/>
    <property type="project" value="UniProtKB-KW"/>
</dbReference>
<dbReference type="GO" id="GO:0000166">
    <property type="term" value="F:nucleotide binding"/>
    <property type="evidence" value="ECO:0007669"/>
    <property type="project" value="UniProtKB-KW"/>
</dbReference>
<dbReference type="GO" id="GO:0003968">
    <property type="term" value="F:RNA-directed RNA polymerase activity"/>
    <property type="evidence" value="ECO:0007669"/>
    <property type="project" value="UniProtKB-KW"/>
</dbReference>
<dbReference type="GO" id="GO:0075526">
    <property type="term" value="P:cap snatching"/>
    <property type="evidence" value="ECO:0007669"/>
    <property type="project" value="UniProtKB-KW"/>
</dbReference>
<dbReference type="GO" id="GO:0039694">
    <property type="term" value="P:viral RNA genome replication"/>
    <property type="evidence" value="ECO:0007669"/>
    <property type="project" value="InterPro"/>
</dbReference>
<dbReference type="Gene3D" id="3.30.70.2640">
    <property type="entry name" value="Arenavirus RNA polymerase"/>
    <property type="match status" value="1"/>
</dbReference>
<dbReference type="InterPro" id="IPR026382">
    <property type="entry name" value="CapSnatch_arenavir"/>
</dbReference>
<dbReference type="InterPro" id="IPR007099">
    <property type="entry name" value="RNA-dir_pol_NSvirus"/>
</dbReference>
<dbReference type="InterPro" id="IPR010453">
    <property type="entry name" value="RNA_pol_arenavir"/>
</dbReference>
<dbReference type="Pfam" id="PF06317">
    <property type="entry name" value="Arena_RNA_pol"/>
    <property type="match status" value="1"/>
</dbReference>
<dbReference type="Pfam" id="PF17296">
    <property type="entry name" value="ArenaCapSnatch"/>
    <property type="match status" value="1"/>
</dbReference>
<dbReference type="PROSITE" id="PS50525">
    <property type="entry name" value="RDRP_SSRNA_NEG_SEG"/>
    <property type="match status" value="1"/>
</dbReference>
<protein>
    <recommendedName>
        <fullName>RNA-directed RNA polymerase L</fullName>
        <shortName>Protein L</shortName>
        <ecNumber evidence="1">2.7.7.48</ecNumber>
    </recommendedName>
    <alternativeName>
        <fullName>Large structural protein</fullName>
    </alternativeName>
    <alternativeName>
        <fullName>Replicase</fullName>
    </alternativeName>
    <alternativeName>
        <fullName>Transcriptase</fullName>
    </alternativeName>
    <domain>
        <recommendedName>
            <fullName>cap-snatching endonuclease</fullName>
            <ecNumber evidence="5">3.1.-.-</ecNumber>
        </recommendedName>
    </domain>
</protein>
<keyword id="KW-1157">Cap snatching</keyword>
<keyword id="KW-1035">Host cytoplasm</keyword>
<keyword id="KW-0378">Hydrolase</keyword>
<keyword id="KW-0460">Magnesium</keyword>
<keyword id="KW-0464">Manganese</keyword>
<keyword id="KW-0479">Metal-binding</keyword>
<keyword id="KW-0547">Nucleotide-binding</keyword>
<keyword id="KW-0548">Nucleotidyltransferase</keyword>
<keyword id="KW-1185">Reference proteome</keyword>
<keyword id="KW-0696">RNA-directed RNA polymerase</keyword>
<keyword id="KW-0808">Transferase</keyword>
<keyword id="KW-0693">Viral RNA replication</keyword>
<keyword id="KW-0946">Virion</keyword>